<sequence>MTFVVTDNCIKCKYTDCVEVCPVDCFYEGPNFLVIHPDECIDCALCEPECPAQAIFSEDEVPENMQEFIELNSELAEVWPNITEKKDALPDAEEWDGVAGKLQHLER</sequence>
<reference key="1">
    <citation type="journal article" date="2000" name="Nature">
        <title>Complete genome sequence of Pseudomonas aeruginosa PAO1, an opportunistic pathogen.</title>
        <authorList>
            <person name="Stover C.K."/>
            <person name="Pham X.-Q.T."/>
            <person name="Erwin A.L."/>
            <person name="Mizoguchi S.D."/>
            <person name="Warrener P."/>
            <person name="Hickey M.J."/>
            <person name="Brinkman F.S.L."/>
            <person name="Hufnagle W.O."/>
            <person name="Kowalik D.J."/>
            <person name="Lagrou M."/>
            <person name="Garber R.L."/>
            <person name="Goltry L."/>
            <person name="Tolentino E."/>
            <person name="Westbrock-Wadman S."/>
            <person name="Yuan Y."/>
            <person name="Brody L.L."/>
            <person name="Coulter S.N."/>
            <person name="Folger K.R."/>
            <person name="Kas A."/>
            <person name="Larbig K."/>
            <person name="Lim R.M."/>
            <person name="Smith K.A."/>
            <person name="Spencer D.H."/>
            <person name="Wong G.K.-S."/>
            <person name="Wu Z."/>
            <person name="Paulsen I.T."/>
            <person name="Reizer J."/>
            <person name="Saier M.H. Jr."/>
            <person name="Hancock R.E.W."/>
            <person name="Lory S."/>
            <person name="Olson M.V."/>
        </authorList>
    </citation>
    <scope>NUCLEOTIDE SEQUENCE [LARGE SCALE GENOMIC DNA]</scope>
    <source>
        <strain>ATCC 15692 / DSM 22644 / CIP 104116 / JCM 14847 / LMG 12228 / 1C / PRS 101 / PAO1</strain>
    </source>
</reference>
<name>FER1_PSEAE</name>
<accession>Q9HY07</accession>
<keyword id="KW-0003">3Fe-4S</keyword>
<keyword id="KW-0004">4Fe-4S</keyword>
<keyword id="KW-0249">Electron transport</keyword>
<keyword id="KW-0408">Iron</keyword>
<keyword id="KW-0411">Iron-sulfur</keyword>
<keyword id="KW-0479">Metal-binding</keyword>
<keyword id="KW-1185">Reference proteome</keyword>
<keyword id="KW-0677">Repeat</keyword>
<keyword id="KW-0813">Transport</keyword>
<protein>
    <recommendedName>
        <fullName>Ferredoxin 1</fullName>
    </recommendedName>
</protein>
<feature type="initiator methionine" description="Removed" evidence="1">
    <location>
        <position position="1"/>
    </location>
</feature>
<feature type="chain" id="PRO_0000287734" description="Ferredoxin 1">
    <location>
        <begin position="2"/>
        <end position="107"/>
    </location>
</feature>
<feature type="domain" description="4Fe-4S ferredoxin-type 1" evidence="2">
    <location>
        <begin position="2"/>
        <end position="30"/>
    </location>
</feature>
<feature type="domain" description="4Fe-4S ferredoxin-type 2" evidence="2">
    <location>
        <begin position="31"/>
        <end position="60"/>
    </location>
</feature>
<feature type="binding site" evidence="1">
    <location>
        <position position="9"/>
    </location>
    <ligand>
        <name>[3Fe-4S] cluster</name>
        <dbReference type="ChEBI" id="CHEBI:21137"/>
    </ligand>
</feature>
<feature type="binding site" evidence="1">
    <location>
        <position position="17"/>
    </location>
    <ligand>
        <name>[3Fe-4S] cluster</name>
        <dbReference type="ChEBI" id="CHEBI:21137"/>
    </ligand>
</feature>
<feature type="binding site" evidence="1">
    <location>
        <position position="21"/>
    </location>
    <ligand>
        <name>[4Fe-4S] cluster</name>
        <dbReference type="ChEBI" id="CHEBI:49883"/>
    </ligand>
</feature>
<feature type="binding site" evidence="1">
    <location>
        <position position="40"/>
    </location>
    <ligand>
        <name>[4Fe-4S] cluster</name>
        <dbReference type="ChEBI" id="CHEBI:49883"/>
    </ligand>
</feature>
<feature type="binding site" evidence="1">
    <location>
        <position position="43"/>
    </location>
    <ligand>
        <name>[4Fe-4S] cluster</name>
        <dbReference type="ChEBI" id="CHEBI:49883"/>
    </ligand>
</feature>
<feature type="binding site" evidence="1">
    <location>
        <position position="46"/>
    </location>
    <ligand>
        <name>[4Fe-4S] cluster</name>
        <dbReference type="ChEBI" id="CHEBI:49883"/>
    </ligand>
</feature>
<feature type="binding site" evidence="1">
    <location>
        <position position="50"/>
    </location>
    <ligand>
        <name>[3Fe-4S] cluster</name>
        <dbReference type="ChEBI" id="CHEBI:21137"/>
    </ligand>
</feature>
<organism>
    <name type="scientific">Pseudomonas aeruginosa (strain ATCC 15692 / DSM 22644 / CIP 104116 / JCM 14847 / LMG 12228 / 1C / PRS 101 / PAO1)</name>
    <dbReference type="NCBI Taxonomy" id="208964"/>
    <lineage>
        <taxon>Bacteria</taxon>
        <taxon>Pseudomonadati</taxon>
        <taxon>Pseudomonadota</taxon>
        <taxon>Gammaproteobacteria</taxon>
        <taxon>Pseudomonadales</taxon>
        <taxon>Pseudomonadaceae</taxon>
        <taxon>Pseudomonas</taxon>
    </lineage>
</organism>
<proteinExistence type="inferred from homology"/>
<evidence type="ECO:0000250" key="1"/>
<evidence type="ECO:0000255" key="2">
    <source>
        <dbReference type="PROSITE-ProRule" id="PRU00711"/>
    </source>
</evidence>
<gene>
    <name type="primary">fdxA</name>
    <name type="ordered locus">PA3621</name>
</gene>
<comment type="function">
    <text evidence="1">Ferredoxins are iron-sulfur proteins that transfer electrons in a wide variety of metabolic reactions.</text>
</comment>
<comment type="cofactor">
    <cofactor evidence="1">
        <name>[4Fe-4S] cluster</name>
        <dbReference type="ChEBI" id="CHEBI:49883"/>
    </cofactor>
    <text evidence="1">Binds 1 [4Fe-4S] cluster.</text>
</comment>
<comment type="cofactor">
    <cofactor evidence="1">
        <name>[3Fe-4S] cluster</name>
        <dbReference type="ChEBI" id="CHEBI:21137"/>
    </cofactor>
    <text evidence="1">Binds 1 [3Fe-4S] cluster.</text>
</comment>
<dbReference type="EMBL" id="AE004091">
    <property type="protein sequence ID" value="AAG07009.1"/>
    <property type="molecule type" value="Genomic_DNA"/>
</dbReference>
<dbReference type="PIR" id="C83193">
    <property type="entry name" value="C83193"/>
</dbReference>
<dbReference type="RefSeq" id="NP_252311.1">
    <property type="nucleotide sequence ID" value="NC_002516.2"/>
</dbReference>
<dbReference type="RefSeq" id="WP_003092272.1">
    <property type="nucleotide sequence ID" value="NZ_QZGE01000001.1"/>
</dbReference>
<dbReference type="SMR" id="Q9HY07"/>
<dbReference type="STRING" id="208964.PA3621"/>
<dbReference type="PaxDb" id="208964-PA3621"/>
<dbReference type="GeneID" id="77219898"/>
<dbReference type="GeneID" id="880230"/>
<dbReference type="KEGG" id="pae:PA3621"/>
<dbReference type="PATRIC" id="fig|208964.12.peg.3790"/>
<dbReference type="PseudoCAP" id="PA3621"/>
<dbReference type="HOGENOM" id="CLU_139698_0_0_6"/>
<dbReference type="InParanoid" id="Q9HY07"/>
<dbReference type="OrthoDB" id="9803397at2"/>
<dbReference type="PhylomeDB" id="Q9HY07"/>
<dbReference type="BioCyc" id="PAER208964:G1FZ6-3690-MONOMER"/>
<dbReference type="Proteomes" id="UP000002438">
    <property type="component" value="Chromosome"/>
</dbReference>
<dbReference type="GO" id="GO:0051538">
    <property type="term" value="F:3 iron, 4 sulfur cluster binding"/>
    <property type="evidence" value="ECO:0007669"/>
    <property type="project" value="UniProtKB-KW"/>
</dbReference>
<dbReference type="GO" id="GO:0051539">
    <property type="term" value="F:4 iron, 4 sulfur cluster binding"/>
    <property type="evidence" value="ECO:0007669"/>
    <property type="project" value="UniProtKB-KW"/>
</dbReference>
<dbReference type="GO" id="GO:0009055">
    <property type="term" value="F:electron transfer activity"/>
    <property type="evidence" value="ECO:0007669"/>
    <property type="project" value="InterPro"/>
</dbReference>
<dbReference type="GO" id="GO:0046872">
    <property type="term" value="F:metal ion binding"/>
    <property type="evidence" value="ECO:0007669"/>
    <property type="project" value="UniProtKB-KW"/>
</dbReference>
<dbReference type="Gene3D" id="3.30.70.20">
    <property type="match status" value="1"/>
</dbReference>
<dbReference type="InterPro" id="IPR017896">
    <property type="entry name" value="4Fe4S_Fe-S-bd"/>
</dbReference>
<dbReference type="InterPro" id="IPR017900">
    <property type="entry name" value="4Fe4S_Fe_S_CS"/>
</dbReference>
<dbReference type="InterPro" id="IPR000813">
    <property type="entry name" value="7Fe_ferredoxin"/>
</dbReference>
<dbReference type="InterPro" id="IPR022569">
    <property type="entry name" value="Fd_C"/>
</dbReference>
<dbReference type="InterPro" id="IPR054829">
    <property type="entry name" value="FdxA"/>
</dbReference>
<dbReference type="InterPro" id="IPR050294">
    <property type="entry name" value="RnfB_subfamily"/>
</dbReference>
<dbReference type="NCBIfam" id="NF045490">
    <property type="entry name" value="FdxA_Protbact"/>
    <property type="match status" value="1"/>
</dbReference>
<dbReference type="PANTHER" id="PTHR42859:SF2">
    <property type="entry name" value="FERREDOXIN"/>
    <property type="match status" value="1"/>
</dbReference>
<dbReference type="PANTHER" id="PTHR42859">
    <property type="entry name" value="OXIDOREDUCTASE"/>
    <property type="match status" value="1"/>
</dbReference>
<dbReference type="Pfam" id="PF11953">
    <property type="entry name" value="DUF3470"/>
    <property type="match status" value="1"/>
</dbReference>
<dbReference type="Pfam" id="PF00037">
    <property type="entry name" value="Fer4"/>
    <property type="match status" value="1"/>
</dbReference>
<dbReference type="PRINTS" id="PR00354">
    <property type="entry name" value="7FE8SFRDOXIN"/>
</dbReference>
<dbReference type="SUPFAM" id="SSF54862">
    <property type="entry name" value="4Fe-4S ferredoxins"/>
    <property type="match status" value="1"/>
</dbReference>
<dbReference type="PROSITE" id="PS00198">
    <property type="entry name" value="4FE4S_FER_1"/>
    <property type="match status" value="1"/>
</dbReference>
<dbReference type="PROSITE" id="PS51379">
    <property type="entry name" value="4FE4S_FER_2"/>
    <property type="match status" value="2"/>
</dbReference>